<reference key="1">
    <citation type="journal article" date="2000" name="Nature">
        <title>Sequence and analysis of chromosome 3 of the plant Arabidopsis thaliana.</title>
        <authorList>
            <person name="Salanoubat M."/>
            <person name="Lemcke K."/>
            <person name="Rieger M."/>
            <person name="Ansorge W."/>
            <person name="Unseld M."/>
            <person name="Fartmann B."/>
            <person name="Valle G."/>
            <person name="Bloecker H."/>
            <person name="Perez-Alonso M."/>
            <person name="Obermaier B."/>
            <person name="Delseny M."/>
            <person name="Boutry M."/>
            <person name="Grivell L.A."/>
            <person name="Mache R."/>
            <person name="Puigdomenech P."/>
            <person name="De Simone V."/>
            <person name="Choisne N."/>
            <person name="Artiguenave F."/>
            <person name="Robert C."/>
            <person name="Brottier P."/>
            <person name="Wincker P."/>
            <person name="Cattolico L."/>
            <person name="Weissenbach J."/>
            <person name="Saurin W."/>
            <person name="Quetier F."/>
            <person name="Schaefer M."/>
            <person name="Mueller-Auer S."/>
            <person name="Gabel C."/>
            <person name="Fuchs M."/>
            <person name="Benes V."/>
            <person name="Wurmbach E."/>
            <person name="Drzonek H."/>
            <person name="Erfle H."/>
            <person name="Jordan N."/>
            <person name="Bangert S."/>
            <person name="Wiedelmann R."/>
            <person name="Kranz H."/>
            <person name="Voss H."/>
            <person name="Holland R."/>
            <person name="Brandt P."/>
            <person name="Nyakatura G."/>
            <person name="Vezzi A."/>
            <person name="D'Angelo M."/>
            <person name="Pallavicini A."/>
            <person name="Toppo S."/>
            <person name="Simionati B."/>
            <person name="Conrad A."/>
            <person name="Hornischer K."/>
            <person name="Kauer G."/>
            <person name="Loehnert T.-H."/>
            <person name="Nordsiek G."/>
            <person name="Reichelt J."/>
            <person name="Scharfe M."/>
            <person name="Schoen O."/>
            <person name="Bargues M."/>
            <person name="Terol J."/>
            <person name="Climent J."/>
            <person name="Navarro P."/>
            <person name="Collado C."/>
            <person name="Perez-Perez A."/>
            <person name="Ottenwaelder B."/>
            <person name="Duchemin D."/>
            <person name="Cooke R."/>
            <person name="Laudie M."/>
            <person name="Berger-Llauro C."/>
            <person name="Purnelle B."/>
            <person name="Masuy D."/>
            <person name="de Haan M."/>
            <person name="Maarse A.C."/>
            <person name="Alcaraz J.-P."/>
            <person name="Cottet A."/>
            <person name="Casacuberta E."/>
            <person name="Monfort A."/>
            <person name="Argiriou A."/>
            <person name="Flores M."/>
            <person name="Liguori R."/>
            <person name="Vitale D."/>
            <person name="Mannhaupt G."/>
            <person name="Haase D."/>
            <person name="Schoof H."/>
            <person name="Rudd S."/>
            <person name="Zaccaria P."/>
            <person name="Mewes H.-W."/>
            <person name="Mayer K.F.X."/>
            <person name="Kaul S."/>
            <person name="Town C.D."/>
            <person name="Koo H.L."/>
            <person name="Tallon L.J."/>
            <person name="Jenkins J."/>
            <person name="Rooney T."/>
            <person name="Rizzo M."/>
            <person name="Walts A."/>
            <person name="Utterback T."/>
            <person name="Fujii C.Y."/>
            <person name="Shea T.P."/>
            <person name="Creasy T.H."/>
            <person name="Haas B."/>
            <person name="Maiti R."/>
            <person name="Wu D."/>
            <person name="Peterson J."/>
            <person name="Van Aken S."/>
            <person name="Pai G."/>
            <person name="Militscher J."/>
            <person name="Sellers P."/>
            <person name="Gill J.E."/>
            <person name="Feldblyum T.V."/>
            <person name="Preuss D."/>
            <person name="Lin X."/>
            <person name="Nierman W.C."/>
            <person name="Salzberg S.L."/>
            <person name="White O."/>
            <person name="Venter J.C."/>
            <person name="Fraser C.M."/>
            <person name="Kaneko T."/>
            <person name="Nakamura Y."/>
            <person name="Sato S."/>
            <person name="Kato T."/>
            <person name="Asamizu E."/>
            <person name="Sasamoto S."/>
            <person name="Kimura T."/>
            <person name="Idesawa K."/>
            <person name="Kawashima K."/>
            <person name="Kishida Y."/>
            <person name="Kiyokawa C."/>
            <person name="Kohara M."/>
            <person name="Matsumoto M."/>
            <person name="Matsuno A."/>
            <person name="Muraki A."/>
            <person name="Nakayama S."/>
            <person name="Nakazaki N."/>
            <person name="Shinpo S."/>
            <person name="Takeuchi C."/>
            <person name="Wada T."/>
            <person name="Watanabe A."/>
            <person name="Yamada M."/>
            <person name="Yasuda M."/>
            <person name="Tabata S."/>
        </authorList>
    </citation>
    <scope>NUCLEOTIDE SEQUENCE [LARGE SCALE GENOMIC DNA]</scope>
    <source>
        <strain>cv. Columbia</strain>
    </source>
</reference>
<reference key="2">
    <citation type="journal article" date="2017" name="Plant J.">
        <title>Araport11: a complete reannotation of the Arabidopsis thaliana reference genome.</title>
        <authorList>
            <person name="Cheng C.Y."/>
            <person name="Krishnakumar V."/>
            <person name="Chan A.P."/>
            <person name="Thibaud-Nissen F."/>
            <person name="Schobel S."/>
            <person name="Town C.D."/>
        </authorList>
    </citation>
    <scope>GENOME REANNOTATION</scope>
    <source>
        <strain>cv. Columbia</strain>
    </source>
</reference>
<reference key="3">
    <citation type="journal article" date="2011" name="J. Exp. Bot.">
        <title>Molecular and genetic characterization of the gene family encoding the voltage-dependent anion channel in Arabidopsis.</title>
        <authorList>
            <person name="Tateda C."/>
            <person name="Watanabe K."/>
            <person name="Kusano T."/>
            <person name="Takahashi Y."/>
        </authorList>
    </citation>
    <scope>GENE FAMILY</scope>
</reference>
<keyword id="KW-0025">Alternative splicing</keyword>
<keyword id="KW-0406">Ion transport</keyword>
<keyword id="KW-0472">Membrane</keyword>
<keyword id="KW-0496">Mitochondrion</keyword>
<keyword id="KW-1000">Mitochondrion outer membrane</keyword>
<keyword id="KW-0626">Porin</keyword>
<keyword id="KW-1185">Reference proteome</keyword>
<keyword id="KW-0812">Transmembrane</keyword>
<keyword id="KW-1134">Transmembrane beta strand</keyword>
<keyword id="KW-0813">Transport</keyword>
<gene>
    <name type="primary">VDAC5</name>
    <name type="ordered locus">At3g49920</name>
    <name type="ORF">F3A4.1</name>
    <name type="ORF">T16K5.270</name>
</gene>
<sequence length="226" mass="24631">MSKGPGLFADIGKYAKDLLTRDYSTDQKFSISTNSVSGVALTSTALKNGVLHAANVATQYKYRNTFFDVKIDTDFNVKSLVYPMNKFVSIDHNTLTGYDTTSRTFTKYNVGVSVTKPDQCVSIILGDKGDSIKASYVYYLDESTRSATVGEVIRKISTNETTVTVGGLYAVDHLTNVKAKLNSNGKFGALLQHEGLPKSIVTISGEIDTKTLDKYPRLGLSLSLKP</sequence>
<evidence type="ECO:0000250" key="1"/>
<evidence type="ECO:0000305" key="2"/>
<dbReference type="EMBL" id="AL132965">
    <property type="protein sequence ID" value="CAB66930.1"/>
    <property type="molecule type" value="Genomic_DNA"/>
</dbReference>
<dbReference type="EMBL" id="CP002686">
    <property type="protein sequence ID" value="AEE78606.1"/>
    <property type="molecule type" value="Genomic_DNA"/>
</dbReference>
<dbReference type="PIR" id="T46058">
    <property type="entry name" value="T46058"/>
</dbReference>
<dbReference type="RefSeq" id="NP_190561.1">
    <molecule id="Q9M2W6-1"/>
    <property type="nucleotide sequence ID" value="NM_114852.1"/>
</dbReference>
<dbReference type="SMR" id="Q9M2W6"/>
<dbReference type="BioGRID" id="9472">
    <property type="interactions" value="5"/>
</dbReference>
<dbReference type="FunCoup" id="Q9M2W6">
    <property type="interactions" value="2771"/>
</dbReference>
<dbReference type="STRING" id="3702.Q9M2W6"/>
<dbReference type="iPTMnet" id="Q9M2W6"/>
<dbReference type="PaxDb" id="3702-AT3G49920.1"/>
<dbReference type="EnsemblPlants" id="AT3G49920.1">
    <molecule id="Q9M2W6-1"/>
    <property type="protein sequence ID" value="AT3G49920.1"/>
    <property type="gene ID" value="AT3G49920"/>
</dbReference>
<dbReference type="GeneID" id="824154"/>
<dbReference type="Gramene" id="AT3G49920.1">
    <molecule id="Q9M2W6-1"/>
    <property type="protein sequence ID" value="AT3G49920.1"/>
    <property type="gene ID" value="AT3G49920"/>
</dbReference>
<dbReference type="KEGG" id="ath:AT3G49920"/>
<dbReference type="Araport" id="AT3G49920"/>
<dbReference type="TAIR" id="AT3G49920">
    <property type="gene designation" value="VDAC5"/>
</dbReference>
<dbReference type="eggNOG" id="KOG3126">
    <property type="taxonomic scope" value="Eukaryota"/>
</dbReference>
<dbReference type="HOGENOM" id="CLU_069937_0_0_1"/>
<dbReference type="InParanoid" id="Q9M2W6"/>
<dbReference type="OMA" id="KFTISTH"/>
<dbReference type="PhylomeDB" id="Q9M2W6"/>
<dbReference type="Proteomes" id="UP000006548">
    <property type="component" value="Chromosome 3"/>
</dbReference>
<dbReference type="ExpressionAtlas" id="Q9M2W6">
    <property type="expression patterns" value="baseline and differential"/>
</dbReference>
<dbReference type="GO" id="GO:0005741">
    <property type="term" value="C:mitochondrial outer membrane"/>
    <property type="evidence" value="ECO:0007669"/>
    <property type="project" value="UniProtKB-SubCell"/>
</dbReference>
<dbReference type="GO" id="GO:0046930">
    <property type="term" value="C:pore complex"/>
    <property type="evidence" value="ECO:0007669"/>
    <property type="project" value="UniProtKB-KW"/>
</dbReference>
<dbReference type="GO" id="GO:0015288">
    <property type="term" value="F:porin activity"/>
    <property type="evidence" value="ECO:0007669"/>
    <property type="project" value="UniProtKB-KW"/>
</dbReference>
<dbReference type="GO" id="GO:0008308">
    <property type="term" value="F:voltage-gated monoatomic anion channel activity"/>
    <property type="evidence" value="ECO:0007669"/>
    <property type="project" value="InterPro"/>
</dbReference>
<dbReference type="CDD" id="cd07306">
    <property type="entry name" value="Porin3_VDAC"/>
    <property type="match status" value="1"/>
</dbReference>
<dbReference type="Gene3D" id="2.40.160.10">
    <property type="entry name" value="Porin"/>
    <property type="match status" value="2"/>
</dbReference>
<dbReference type="InterPro" id="IPR023614">
    <property type="entry name" value="Porin_dom_sf"/>
</dbReference>
<dbReference type="InterPro" id="IPR001925">
    <property type="entry name" value="Porin_Euk"/>
</dbReference>
<dbReference type="InterPro" id="IPR027246">
    <property type="entry name" value="Porin_Euk/Tom40"/>
</dbReference>
<dbReference type="PANTHER" id="PTHR11743:SF23">
    <property type="entry name" value="MITOCHONDRIAL OUTER MEMBRANE PROTEIN PORIN 5-RELATED"/>
    <property type="match status" value="1"/>
</dbReference>
<dbReference type="PANTHER" id="PTHR11743">
    <property type="entry name" value="VOLTAGE-DEPENDENT ANION-SELECTIVE CHANNEL"/>
    <property type="match status" value="1"/>
</dbReference>
<dbReference type="Pfam" id="PF01459">
    <property type="entry name" value="Porin_3"/>
    <property type="match status" value="2"/>
</dbReference>
<organism>
    <name type="scientific">Arabidopsis thaliana</name>
    <name type="common">Mouse-ear cress</name>
    <dbReference type="NCBI Taxonomy" id="3702"/>
    <lineage>
        <taxon>Eukaryota</taxon>
        <taxon>Viridiplantae</taxon>
        <taxon>Streptophyta</taxon>
        <taxon>Embryophyta</taxon>
        <taxon>Tracheophyta</taxon>
        <taxon>Spermatophyta</taxon>
        <taxon>Magnoliopsida</taxon>
        <taxon>eudicotyledons</taxon>
        <taxon>Gunneridae</taxon>
        <taxon>Pentapetalae</taxon>
        <taxon>rosids</taxon>
        <taxon>malvids</taxon>
        <taxon>Brassicales</taxon>
        <taxon>Brassicaceae</taxon>
        <taxon>Camelineae</taxon>
        <taxon>Arabidopsis</taxon>
    </lineage>
</organism>
<name>VDAC5_ARATH</name>
<comment type="function">
    <text evidence="1">Putative channel that allows diffusion of small hydrophilic molecules through membranes.</text>
</comment>
<comment type="subcellular location">
    <subcellularLocation>
        <location evidence="2">Mitochondrion outer membrane</location>
    </subcellularLocation>
</comment>
<comment type="alternative products">
    <event type="alternative splicing"/>
    <isoform>
        <id>Q9M2W6-1</id>
        <name>1</name>
        <sequence type="displayed"/>
    </isoform>
    <text>A number of isoforms are produced. According to EST sequences.</text>
</comment>
<comment type="domain">
    <text>Consists mainly of membrane-spanning sided beta-sheets.</text>
</comment>
<comment type="similarity">
    <text evidence="2">Belongs to the eukaryotic mitochondrial porin (TC 1.B.8.1) family.</text>
</comment>
<comment type="caution">
    <text evidence="2">Could be the product of a pseudogene.</text>
</comment>
<proteinExistence type="uncertain"/>
<accession>Q9M2W6</accession>
<protein>
    <recommendedName>
        <fullName>Putative mitochondrial outer membrane protein porin 5</fullName>
    </recommendedName>
    <alternativeName>
        <fullName>Voltage-dependent anion-selective channel protein 5</fullName>
        <shortName>AtVDAC5</shortName>
        <shortName>VDAC-5</shortName>
    </alternativeName>
</protein>
<feature type="chain" id="PRO_0000414083" description="Putative mitochondrial outer membrane protein porin 5">
    <location>
        <begin position="1"/>
        <end position="226"/>
    </location>
</feature>